<comment type="function">
    <text evidence="1">This is one of the proteins that bind and probably mediate the attachment of the 5S RNA into the large ribosomal subunit, where it forms part of the central protuberance.</text>
</comment>
<comment type="subunit">
    <text evidence="1">Part of the 50S ribosomal subunit; part of the 5S rRNA/L5/L18/L25 subcomplex. Contacts the 5S and 23S rRNAs.</text>
</comment>
<comment type="similarity">
    <text evidence="1">Belongs to the universal ribosomal protein uL18 family.</text>
</comment>
<dbReference type="EMBL" id="BX908798">
    <property type="protein sequence ID" value="CAF23151.1"/>
    <property type="molecule type" value="Genomic_DNA"/>
</dbReference>
<dbReference type="RefSeq" id="WP_011174977.1">
    <property type="nucleotide sequence ID" value="NC_005861.2"/>
</dbReference>
<dbReference type="SMR" id="Q6ME48"/>
<dbReference type="STRING" id="264201.pc0427"/>
<dbReference type="KEGG" id="pcu:PC_RS02085"/>
<dbReference type="eggNOG" id="COG0256">
    <property type="taxonomic scope" value="Bacteria"/>
</dbReference>
<dbReference type="HOGENOM" id="CLU_098841_0_1_0"/>
<dbReference type="OrthoDB" id="9810939at2"/>
<dbReference type="Proteomes" id="UP000000529">
    <property type="component" value="Chromosome"/>
</dbReference>
<dbReference type="GO" id="GO:0022625">
    <property type="term" value="C:cytosolic large ribosomal subunit"/>
    <property type="evidence" value="ECO:0007669"/>
    <property type="project" value="TreeGrafter"/>
</dbReference>
<dbReference type="GO" id="GO:0008097">
    <property type="term" value="F:5S rRNA binding"/>
    <property type="evidence" value="ECO:0007669"/>
    <property type="project" value="TreeGrafter"/>
</dbReference>
<dbReference type="GO" id="GO:0003735">
    <property type="term" value="F:structural constituent of ribosome"/>
    <property type="evidence" value="ECO:0007669"/>
    <property type="project" value="InterPro"/>
</dbReference>
<dbReference type="GO" id="GO:0006412">
    <property type="term" value="P:translation"/>
    <property type="evidence" value="ECO:0007669"/>
    <property type="project" value="UniProtKB-UniRule"/>
</dbReference>
<dbReference type="CDD" id="cd00432">
    <property type="entry name" value="Ribosomal_L18_L5e"/>
    <property type="match status" value="1"/>
</dbReference>
<dbReference type="FunFam" id="3.30.420.100:FF:000001">
    <property type="entry name" value="50S ribosomal protein L18"/>
    <property type="match status" value="1"/>
</dbReference>
<dbReference type="Gene3D" id="3.30.420.100">
    <property type="match status" value="1"/>
</dbReference>
<dbReference type="HAMAP" id="MF_01337_B">
    <property type="entry name" value="Ribosomal_uL18_B"/>
    <property type="match status" value="1"/>
</dbReference>
<dbReference type="InterPro" id="IPR004389">
    <property type="entry name" value="Ribosomal_uL18_bac-type"/>
</dbReference>
<dbReference type="InterPro" id="IPR005484">
    <property type="entry name" value="Ribosomal_uL18_bac/euk"/>
</dbReference>
<dbReference type="NCBIfam" id="TIGR00060">
    <property type="entry name" value="L18_bact"/>
    <property type="match status" value="1"/>
</dbReference>
<dbReference type="PANTHER" id="PTHR12899">
    <property type="entry name" value="39S RIBOSOMAL PROTEIN L18, MITOCHONDRIAL"/>
    <property type="match status" value="1"/>
</dbReference>
<dbReference type="PANTHER" id="PTHR12899:SF3">
    <property type="entry name" value="LARGE RIBOSOMAL SUBUNIT PROTEIN UL18M"/>
    <property type="match status" value="1"/>
</dbReference>
<dbReference type="Pfam" id="PF00861">
    <property type="entry name" value="Ribosomal_L18p"/>
    <property type="match status" value="1"/>
</dbReference>
<dbReference type="SUPFAM" id="SSF53137">
    <property type="entry name" value="Translational machinery components"/>
    <property type="match status" value="1"/>
</dbReference>
<keyword id="KW-1185">Reference proteome</keyword>
<keyword id="KW-0687">Ribonucleoprotein</keyword>
<keyword id="KW-0689">Ribosomal protein</keyword>
<keyword id="KW-0694">RNA-binding</keyword>
<keyword id="KW-0699">rRNA-binding</keyword>
<proteinExistence type="inferred from homology"/>
<name>RL18_PARUW</name>
<reference key="1">
    <citation type="journal article" date="2004" name="Science">
        <title>Illuminating the evolutionary history of chlamydiae.</title>
        <authorList>
            <person name="Horn M."/>
            <person name="Collingro A."/>
            <person name="Schmitz-Esser S."/>
            <person name="Beier C.L."/>
            <person name="Purkhold U."/>
            <person name="Fartmann B."/>
            <person name="Brandt P."/>
            <person name="Nyakatura G.J."/>
            <person name="Droege M."/>
            <person name="Frishman D."/>
            <person name="Rattei T."/>
            <person name="Mewes H.-W."/>
            <person name="Wagner M."/>
        </authorList>
    </citation>
    <scope>NUCLEOTIDE SEQUENCE [LARGE SCALE GENOMIC DNA]</scope>
    <source>
        <strain>UWE25</strain>
    </source>
</reference>
<organism>
    <name type="scientific">Protochlamydia amoebophila (strain UWE25)</name>
    <dbReference type="NCBI Taxonomy" id="264201"/>
    <lineage>
        <taxon>Bacteria</taxon>
        <taxon>Pseudomonadati</taxon>
        <taxon>Chlamydiota</taxon>
        <taxon>Chlamydiia</taxon>
        <taxon>Parachlamydiales</taxon>
        <taxon>Parachlamydiaceae</taxon>
        <taxon>Candidatus Protochlamydia</taxon>
    </lineage>
</organism>
<sequence length="123" mass="13608">MINQANKTAKLRVKRAVRVRKHLRGTGLKPRLCVVKSNSHIQAQLIDDETGTTLGGTATFAKEYRNTEFCKKNKASARKLGEQIAEIAKSKNIKEVVFDRGPFKYHGILAELANAARAGGLQF</sequence>
<protein>
    <recommendedName>
        <fullName evidence="1">Large ribosomal subunit protein uL18</fullName>
    </recommendedName>
    <alternativeName>
        <fullName evidence="2">50S ribosomal protein L18</fullName>
    </alternativeName>
</protein>
<evidence type="ECO:0000255" key="1">
    <source>
        <dbReference type="HAMAP-Rule" id="MF_01337"/>
    </source>
</evidence>
<evidence type="ECO:0000305" key="2"/>
<accession>Q6ME48</accession>
<feature type="chain" id="PRO_0000131313" description="Large ribosomal subunit protein uL18">
    <location>
        <begin position="1"/>
        <end position="123"/>
    </location>
</feature>
<gene>
    <name evidence="1" type="primary">rplR</name>
    <name type="ordered locus">pc0427</name>
</gene>